<keyword id="KW-0963">Cytoplasm</keyword>
<keyword id="KW-0396">Initiation factor</keyword>
<keyword id="KW-0597">Phosphoprotein</keyword>
<keyword id="KW-0648">Protein biosynthesis</keyword>
<keyword id="KW-1185">Reference proteome</keyword>
<reference key="1">
    <citation type="journal article" date="2007" name="Nature">
        <title>Evolution of genes and genomes on the Drosophila phylogeny.</title>
        <authorList>
            <consortium name="Drosophila 12 genomes consortium"/>
        </authorList>
    </citation>
    <scope>NUCLEOTIDE SEQUENCE [LARGE SCALE GENOMIC DNA]</scope>
    <source>
        <strain>Tucson 15081-1352.22</strain>
    </source>
</reference>
<sequence length="913" mass="106087">MSRFFANGSDSESESSEEEVQASNFNKAANFQFSDDEEEVKRVVRSTKEKRYENLTSIIKTIRNHKKIKDIPNTLSSFEDLTRAYTKALPVISKEENGITPRFYIRCLAELEDFINEVWEDREGRKNLSKNNAKSLGTLRQKVRKYIKDFEEDLARFREAPDQESDVEEGEGEPHDSDGDRAGADSDDGVGAGTGKLAELPKAAKSAPTKAVADEDDSDDSIDWDSDTESETESSEDENLYQNMRERFLKRTTEKEDKDDDKRKDKRKEQKHKVRKRAEDDEDGEWETVVKGNVVEKPKMFEKDAEIDIPLVLAKLIEIMSARGKKRTDRRLQIDLLFELRDIAEQHALGTPISVKIHFNIISAIFDYNQKISEPMKLEHWALLLEVMQSMMKLLLANPDIIMNESVAEEHEEYVTAPFYIRGCPLAAVERLDDEFTKLLKECDPHSNDYVSRLKDEINVVKTIELVVQYFERCGNNNERCRIYLRKIEHLYYKFDPEVLKRKRGELPAAGTAPSSVEVMDKLCKFIYAKDDTDRIRTRAILAHIYHHAMHDNWFQARDLVLMSHLQDNIDAADPSTRILYNRMMANLGLCAFRQENIKDAHHCLVDLMVTGKPKELLAQGLLPQRQHERSAEQEKIEKQRQMPFHMHINLELLECVYLVSAMLLEIPYIAAHEFDARRRMISKTFYQQLRSSERQSLVGPPESMREHVVAAAKAMRCGNWQACANFIVNKKMNTKVWDLFYESERVREMLVKFIKEESLRTYLFTYSNVYTSISIPSLAQMYELPLPKVHSIISKMIINEELMASLDDPSETVVMHRSEPSRLQALAMQFVDKVTNLVDVNEKVFDMKQGNFFQRGNMGNRDRGYNRNQNNQGGNWGGQRRDNRNQRNRNQRGHHKQQQQQQQQQVQTIEEE</sequence>
<feature type="chain" id="PRO_0000365389" description="Eukaryotic translation initiation factor 3 subunit C">
    <location>
        <begin position="1"/>
        <end position="913"/>
    </location>
</feature>
<feature type="domain" description="PCI" evidence="2">
    <location>
        <begin position="645"/>
        <end position="821"/>
    </location>
</feature>
<feature type="region of interest" description="Disordered" evidence="3">
    <location>
        <begin position="1"/>
        <end position="22"/>
    </location>
</feature>
<feature type="region of interest" description="Disordered" evidence="3">
    <location>
        <begin position="157"/>
        <end position="285"/>
    </location>
</feature>
<feature type="region of interest" description="Disordered" evidence="3">
    <location>
        <begin position="856"/>
        <end position="913"/>
    </location>
</feature>
<feature type="compositionally biased region" description="Acidic residues" evidence="3">
    <location>
        <begin position="11"/>
        <end position="20"/>
    </location>
</feature>
<feature type="compositionally biased region" description="Acidic residues" evidence="3">
    <location>
        <begin position="162"/>
        <end position="171"/>
    </location>
</feature>
<feature type="compositionally biased region" description="Basic and acidic residues" evidence="3">
    <location>
        <begin position="172"/>
        <end position="184"/>
    </location>
</feature>
<feature type="compositionally biased region" description="Acidic residues" evidence="3">
    <location>
        <begin position="214"/>
        <end position="239"/>
    </location>
</feature>
<feature type="compositionally biased region" description="Basic and acidic residues" evidence="3">
    <location>
        <begin position="244"/>
        <end position="263"/>
    </location>
</feature>
<feature type="compositionally biased region" description="Basic residues" evidence="3">
    <location>
        <begin position="264"/>
        <end position="276"/>
    </location>
</feature>
<feature type="compositionally biased region" description="Basic residues" evidence="3">
    <location>
        <begin position="887"/>
        <end position="898"/>
    </location>
</feature>
<feature type="modified residue" description="Phosphoserine" evidence="1">
    <location>
        <position position="34"/>
    </location>
</feature>
<feature type="modified residue" description="Phosphoserine" evidence="1">
    <location>
        <position position="165"/>
    </location>
</feature>
<feature type="modified residue" description="Phosphoserine" evidence="1">
    <location>
        <position position="177"/>
    </location>
</feature>
<feature type="modified residue" description="Phosphoserine" evidence="1">
    <location>
        <position position="186"/>
    </location>
</feature>
<organism>
    <name type="scientific">Drosophila mojavensis</name>
    <name type="common">Fruit fly</name>
    <dbReference type="NCBI Taxonomy" id="7230"/>
    <lineage>
        <taxon>Eukaryota</taxon>
        <taxon>Metazoa</taxon>
        <taxon>Ecdysozoa</taxon>
        <taxon>Arthropoda</taxon>
        <taxon>Hexapoda</taxon>
        <taxon>Insecta</taxon>
        <taxon>Pterygota</taxon>
        <taxon>Neoptera</taxon>
        <taxon>Endopterygota</taxon>
        <taxon>Diptera</taxon>
        <taxon>Brachycera</taxon>
        <taxon>Muscomorpha</taxon>
        <taxon>Ephydroidea</taxon>
        <taxon>Drosophilidae</taxon>
        <taxon>Drosophila</taxon>
    </lineage>
</organism>
<name>EIF3C_DROMO</name>
<gene>
    <name evidence="1" type="primary">eIF3c</name>
    <name evidence="1" type="synonym">eIF3-S8</name>
    <name type="ORF">GI18792</name>
</gene>
<dbReference type="EMBL" id="CH933808">
    <property type="protein sequence ID" value="EDW09922.1"/>
    <property type="molecule type" value="Genomic_DNA"/>
</dbReference>
<dbReference type="SMR" id="B4KN00"/>
<dbReference type="FunCoup" id="B4KN00">
    <property type="interactions" value="1950"/>
</dbReference>
<dbReference type="EnsemblMetazoa" id="FBtr0169517">
    <property type="protein sequence ID" value="FBpp0168009"/>
    <property type="gene ID" value="FBgn0141531"/>
</dbReference>
<dbReference type="EnsemblMetazoa" id="XM_002005951.4">
    <property type="protein sequence ID" value="XP_002005987.1"/>
    <property type="gene ID" value="LOC6580119"/>
</dbReference>
<dbReference type="GeneID" id="6580119"/>
<dbReference type="KEGG" id="dmo:Dmoj_GI18792"/>
<dbReference type="CTD" id="8663"/>
<dbReference type="eggNOG" id="KOG1076">
    <property type="taxonomic scope" value="Eukaryota"/>
</dbReference>
<dbReference type="HOGENOM" id="CLU_004304_0_0_1"/>
<dbReference type="InParanoid" id="B4KN00"/>
<dbReference type="OMA" id="FRCGLIK"/>
<dbReference type="OrthoDB" id="29647at2759"/>
<dbReference type="PhylomeDB" id="B4KN00"/>
<dbReference type="ChiTaRS" id="eIF3-S8">
    <property type="organism name" value="fly"/>
</dbReference>
<dbReference type="Proteomes" id="UP000009192">
    <property type="component" value="Unassembled WGS sequence"/>
</dbReference>
<dbReference type="GO" id="GO:0016282">
    <property type="term" value="C:eukaryotic 43S preinitiation complex"/>
    <property type="evidence" value="ECO:0007669"/>
    <property type="project" value="UniProtKB-UniRule"/>
</dbReference>
<dbReference type="GO" id="GO:0033290">
    <property type="term" value="C:eukaryotic 48S preinitiation complex"/>
    <property type="evidence" value="ECO:0007669"/>
    <property type="project" value="UniProtKB-UniRule"/>
</dbReference>
<dbReference type="GO" id="GO:0005852">
    <property type="term" value="C:eukaryotic translation initiation factor 3 complex"/>
    <property type="evidence" value="ECO:0007669"/>
    <property type="project" value="UniProtKB-UniRule"/>
</dbReference>
<dbReference type="GO" id="GO:0003723">
    <property type="term" value="F:RNA binding"/>
    <property type="evidence" value="ECO:0007669"/>
    <property type="project" value="InterPro"/>
</dbReference>
<dbReference type="GO" id="GO:0003743">
    <property type="term" value="F:translation initiation factor activity"/>
    <property type="evidence" value="ECO:0007669"/>
    <property type="project" value="UniProtKB-UniRule"/>
</dbReference>
<dbReference type="GO" id="GO:0031369">
    <property type="term" value="F:translation initiation factor binding"/>
    <property type="evidence" value="ECO:0007669"/>
    <property type="project" value="InterPro"/>
</dbReference>
<dbReference type="GO" id="GO:0001732">
    <property type="term" value="P:formation of cytoplasmic translation initiation complex"/>
    <property type="evidence" value="ECO:0007669"/>
    <property type="project" value="UniProtKB-UniRule"/>
</dbReference>
<dbReference type="Gene3D" id="1.25.40.570">
    <property type="match status" value="1"/>
</dbReference>
<dbReference type="HAMAP" id="MF_03002">
    <property type="entry name" value="eIF3c"/>
    <property type="match status" value="1"/>
</dbReference>
<dbReference type="InterPro" id="IPR027516">
    <property type="entry name" value="EIF3C"/>
</dbReference>
<dbReference type="InterPro" id="IPR008905">
    <property type="entry name" value="EIF3C_N_dom"/>
</dbReference>
<dbReference type="InterPro" id="IPR000717">
    <property type="entry name" value="PCI_dom"/>
</dbReference>
<dbReference type="InterPro" id="IPR036390">
    <property type="entry name" value="WH_DNA-bd_sf"/>
</dbReference>
<dbReference type="PANTHER" id="PTHR13937">
    <property type="entry name" value="EUKARYOTIC TRANSLATION INITATION FACTOR 3, SUBUNIT 8 EIF3S8 -RELATED"/>
    <property type="match status" value="1"/>
</dbReference>
<dbReference type="PANTHER" id="PTHR13937:SF0">
    <property type="entry name" value="EUKARYOTIC TRANSLATION INITIATION FACTOR 3 SUBUNIT C-RELATED"/>
    <property type="match status" value="1"/>
</dbReference>
<dbReference type="Pfam" id="PF05470">
    <property type="entry name" value="eIF-3c_N"/>
    <property type="match status" value="1"/>
</dbReference>
<dbReference type="Pfam" id="PF01399">
    <property type="entry name" value="PCI"/>
    <property type="match status" value="1"/>
</dbReference>
<dbReference type="SMART" id="SM00088">
    <property type="entry name" value="PINT"/>
    <property type="match status" value="1"/>
</dbReference>
<dbReference type="SUPFAM" id="SSF46785">
    <property type="entry name" value="Winged helix' DNA-binding domain"/>
    <property type="match status" value="1"/>
</dbReference>
<dbReference type="PROSITE" id="PS50250">
    <property type="entry name" value="PCI"/>
    <property type="match status" value="1"/>
</dbReference>
<accession>B4KN00</accession>
<comment type="function">
    <text evidence="1">Component of the eukaryotic translation initiation factor 3 (eIF-3) complex, which is involved in protein synthesis of a specialized repertoire of mRNAs and, together with other initiation factors, stimulates binding of mRNA and methionyl-tRNAi to the 40S ribosome. The eIF-3 complex specifically targets and initiates translation of a subset of mRNAs involved in cell proliferation.</text>
</comment>
<comment type="subunit">
    <text evidence="1">Component of the eukaryotic translation initiation factor 3 (eIF-3) complex. The eIF-3 complex interacts with pix.</text>
</comment>
<comment type="subcellular location">
    <subcellularLocation>
        <location evidence="1">Cytoplasm</location>
    </subcellularLocation>
</comment>
<comment type="similarity">
    <text evidence="1">Belongs to the eIF-3 subunit C family.</text>
</comment>
<evidence type="ECO:0000255" key="1">
    <source>
        <dbReference type="HAMAP-Rule" id="MF_03002"/>
    </source>
</evidence>
<evidence type="ECO:0000255" key="2">
    <source>
        <dbReference type="PROSITE-ProRule" id="PRU01185"/>
    </source>
</evidence>
<evidence type="ECO:0000256" key="3">
    <source>
        <dbReference type="SAM" id="MobiDB-lite"/>
    </source>
</evidence>
<protein>
    <recommendedName>
        <fullName evidence="1">Eukaryotic translation initiation factor 3 subunit C</fullName>
        <shortName evidence="1">eIF3c</shortName>
    </recommendedName>
    <alternativeName>
        <fullName evidence="1">Eukaryotic translation initiation factor 3 subunit 8</fullName>
    </alternativeName>
</protein>
<proteinExistence type="inferred from homology"/>